<sequence>MGPKKGKRSHSKNHHHHNNGNNNNNNNSGGGSSSDILYTYSQDTRILLFKVILTQNEEIICMVIQIAYGLPGLPKISDISRDLGILILKLPNRTIRELELFLESKNIYFREDQHINYLNEIPQPTTTTTSPPPPPPPSSISTTTTTTTATAIEIESSSGLTSNITDSTEIQLDSTTTDTKTTSTTSTTTNNSSDSNNNNNNNNNNNSNNILNFPFNCQNKSKQKRPISKEESFNKMVQYNFDLGKIFDEFTREVLLDDLKNDLKIDNIPIDNISISPTPIISPVFQEYDLFLMDSFIILCGQLDNVKLTLEEFKDYYKKYKLLNQYIEDFKDNLINDFLVTVEILASWYIPQKDYSIVKFINCFGEMLDSTIIESFSYIFNKTIKKEDDWSISFIQAALGSNEEFKRQVMCLNDELIQDRYDQSLYSIMHPIKFDNVREFILIYSRDENYFEPQEFWYLICKYDAIAITQHIINNNIAEEDLSKRSGKTYNSNLSENPLEINPLSLLEICSANFSHKIASILFQFYDFKDSMPTRFSLRGVFKPTTTTTTTTTTTTTTTTTIDKDEKDKENNNNNVISQQFQYFRVLDVNCYFNDVIKKRAPIFIDLMTQSNIYLNTEVGEGSDENVDTHESIYSFQNSTEYLAINSNSIHRLKRSSISLLSKVLEFNDRDTLISLLKNLTQGGCTLCKDLIDEKQLLITISRPQYHQSIQILHQNGYTIIPKYQLRDPYIFFAGSKQILQYLLEIHTNSLSETIDIRHWIQAIMSAGQYSSETEFFQYYPKIQELSLRDKYSRTLNILELQYILGHIEGIEFLLEKYLDFTKPYHLDNQELLEIFDVTFVQKKDIRTEESLKAEKDLLEQEENEKKRLKEKRKKEEKEKKKQQNLKQKSLITNNTTTTTTTTPIPITVPIPTQTQTPTQTPTQTPIPTPIPTTPIPTTPIPIPIQLTPTTPKTPKTPKTPKTPTTPKTPITPKTPKNSTLDKQTISTPKTPPPLSVNTTPITPSPPPQTIATTITTTTTTPKTTKTTTTSKIPTLIIELNKYDISIGKFKFSRKDEFIIGRGSNGTLVFKGIWNDRIPVAIKQMHKAFNPLISKEIEVLITLTNKNCNNIVRYIDQEEDDMFVYLGLTLCNGSLQNLVEKDLEINLISTSNNENNNNNKLKNFIGSELRLLELIKDIVYGIQFLHQQGIVHNDLNPRNILIKDDRFIISDLGLSKMEVTSSYSFTMHAPTGQEGFHPAEVLLEKRKTKSVDIFSMGCILFYLMTGGQHPFGDKFFRMANILTDKPILEPLKHNLVACDLISQMISKNESDRPTTENILLHPFFWNHEKKVKFIDASLNLFKDSNGLFTSKLNKLINQFQDTDGVNTTSTPFLSKPWNQLIDPTLIEHITNKQNQLSGGSSIGNNNNNSLTLSGKKFYFYDYSQVKDLVRCIRNTIQHHKEIQRLISQSPSSSNKQEVLDCLESQELVLSYFEEKVPDLLLFLYQKFKKHLDSKSLIYFNDLIIK</sequence>
<proteinExistence type="inferred from homology"/>
<protein>
    <recommendedName>
        <fullName>Probable serine/threonine-protein kinase irlD</fullName>
        <ecNumber>2.7.11.1</ecNumber>
    </recommendedName>
    <alternativeName>
        <fullName>Inositol-requiring protein-like protein kinase D</fullName>
    </alternativeName>
</protein>
<reference key="1">
    <citation type="journal article" date="2005" name="Nature">
        <title>The genome of the social amoeba Dictyostelium discoideum.</title>
        <authorList>
            <person name="Eichinger L."/>
            <person name="Pachebat J.A."/>
            <person name="Gloeckner G."/>
            <person name="Rajandream M.A."/>
            <person name="Sucgang R."/>
            <person name="Berriman M."/>
            <person name="Song J."/>
            <person name="Olsen R."/>
            <person name="Szafranski K."/>
            <person name="Xu Q."/>
            <person name="Tunggal B."/>
            <person name="Kummerfeld S."/>
            <person name="Madera M."/>
            <person name="Konfortov B.A."/>
            <person name="Rivero F."/>
            <person name="Bankier A.T."/>
            <person name="Lehmann R."/>
            <person name="Hamlin N."/>
            <person name="Davies R."/>
            <person name="Gaudet P."/>
            <person name="Fey P."/>
            <person name="Pilcher K."/>
            <person name="Chen G."/>
            <person name="Saunders D."/>
            <person name="Sodergren E.J."/>
            <person name="Davis P."/>
            <person name="Kerhornou A."/>
            <person name="Nie X."/>
            <person name="Hall N."/>
            <person name="Anjard C."/>
            <person name="Hemphill L."/>
            <person name="Bason N."/>
            <person name="Farbrother P."/>
            <person name="Desany B."/>
            <person name="Just E."/>
            <person name="Morio T."/>
            <person name="Rost R."/>
            <person name="Churcher C.M."/>
            <person name="Cooper J."/>
            <person name="Haydock S."/>
            <person name="van Driessche N."/>
            <person name="Cronin A."/>
            <person name="Goodhead I."/>
            <person name="Muzny D.M."/>
            <person name="Mourier T."/>
            <person name="Pain A."/>
            <person name="Lu M."/>
            <person name="Harper D."/>
            <person name="Lindsay R."/>
            <person name="Hauser H."/>
            <person name="James K.D."/>
            <person name="Quiles M."/>
            <person name="Madan Babu M."/>
            <person name="Saito T."/>
            <person name="Buchrieser C."/>
            <person name="Wardroper A."/>
            <person name="Felder M."/>
            <person name="Thangavelu M."/>
            <person name="Johnson D."/>
            <person name="Knights A."/>
            <person name="Loulseged H."/>
            <person name="Mungall K.L."/>
            <person name="Oliver K."/>
            <person name="Price C."/>
            <person name="Quail M.A."/>
            <person name="Urushihara H."/>
            <person name="Hernandez J."/>
            <person name="Rabbinowitsch E."/>
            <person name="Steffen D."/>
            <person name="Sanders M."/>
            <person name="Ma J."/>
            <person name="Kohara Y."/>
            <person name="Sharp S."/>
            <person name="Simmonds M.N."/>
            <person name="Spiegler S."/>
            <person name="Tivey A."/>
            <person name="Sugano S."/>
            <person name="White B."/>
            <person name="Walker D."/>
            <person name="Woodward J.R."/>
            <person name="Winckler T."/>
            <person name="Tanaka Y."/>
            <person name="Shaulsky G."/>
            <person name="Schleicher M."/>
            <person name="Weinstock G.M."/>
            <person name="Rosenthal A."/>
            <person name="Cox E.C."/>
            <person name="Chisholm R.L."/>
            <person name="Gibbs R.A."/>
            <person name="Loomis W.F."/>
            <person name="Platzer M."/>
            <person name="Kay R.R."/>
            <person name="Williams J.G."/>
            <person name="Dear P.H."/>
            <person name="Noegel A.A."/>
            <person name="Barrell B.G."/>
            <person name="Kuspa A."/>
        </authorList>
    </citation>
    <scope>NUCLEOTIDE SEQUENCE [LARGE SCALE GENOMIC DNA]</scope>
    <source>
        <strain>AX4</strain>
    </source>
</reference>
<accession>Q55DJ9</accession>
<evidence type="ECO:0000255" key="1"/>
<evidence type="ECO:0000255" key="2">
    <source>
        <dbReference type="PROSITE-ProRule" id="PRU00159"/>
    </source>
</evidence>
<evidence type="ECO:0000255" key="3">
    <source>
        <dbReference type="PROSITE-ProRule" id="PRU00725"/>
    </source>
</evidence>
<evidence type="ECO:0000256" key="4">
    <source>
        <dbReference type="SAM" id="MobiDB-lite"/>
    </source>
</evidence>
<keyword id="KW-0067">ATP-binding</keyword>
<keyword id="KW-0175">Coiled coil</keyword>
<keyword id="KW-0418">Kinase</keyword>
<keyword id="KW-0547">Nucleotide-binding</keyword>
<keyword id="KW-1185">Reference proteome</keyword>
<keyword id="KW-0723">Serine/threonine-protein kinase</keyword>
<keyword id="KW-0808">Transferase</keyword>
<comment type="catalytic activity">
    <reaction>
        <text>L-seryl-[protein] + ATP = O-phospho-L-seryl-[protein] + ADP + H(+)</text>
        <dbReference type="Rhea" id="RHEA:17989"/>
        <dbReference type="Rhea" id="RHEA-COMP:9863"/>
        <dbReference type="Rhea" id="RHEA-COMP:11604"/>
        <dbReference type="ChEBI" id="CHEBI:15378"/>
        <dbReference type="ChEBI" id="CHEBI:29999"/>
        <dbReference type="ChEBI" id="CHEBI:30616"/>
        <dbReference type="ChEBI" id="CHEBI:83421"/>
        <dbReference type="ChEBI" id="CHEBI:456216"/>
        <dbReference type="EC" id="2.7.11.1"/>
    </reaction>
</comment>
<comment type="catalytic activity">
    <reaction>
        <text>L-threonyl-[protein] + ATP = O-phospho-L-threonyl-[protein] + ADP + H(+)</text>
        <dbReference type="Rhea" id="RHEA:46608"/>
        <dbReference type="Rhea" id="RHEA-COMP:11060"/>
        <dbReference type="Rhea" id="RHEA-COMP:11605"/>
        <dbReference type="ChEBI" id="CHEBI:15378"/>
        <dbReference type="ChEBI" id="CHEBI:30013"/>
        <dbReference type="ChEBI" id="CHEBI:30616"/>
        <dbReference type="ChEBI" id="CHEBI:61977"/>
        <dbReference type="ChEBI" id="CHEBI:456216"/>
        <dbReference type="EC" id="2.7.11.1"/>
    </reaction>
</comment>
<comment type="similarity">
    <text evidence="2">Belongs to the protein kinase superfamily. Ser/Thr protein kinase family.</text>
</comment>
<dbReference type="EC" id="2.7.11.1"/>
<dbReference type="EMBL" id="AAFI02000005">
    <property type="protein sequence ID" value="EAL72166.1"/>
    <property type="molecule type" value="Genomic_DNA"/>
</dbReference>
<dbReference type="RefSeq" id="XP_646132.1">
    <property type="nucleotide sequence ID" value="XM_641040.1"/>
</dbReference>
<dbReference type="SMR" id="Q55DJ9"/>
<dbReference type="FunCoup" id="Q55DJ9">
    <property type="interactions" value="246"/>
</dbReference>
<dbReference type="STRING" id="44689.Q55DJ9"/>
<dbReference type="GlyGen" id="Q55DJ9">
    <property type="glycosylation" value="2 sites"/>
</dbReference>
<dbReference type="PaxDb" id="44689-DDB0231221"/>
<dbReference type="EnsemblProtists" id="EAL72166">
    <property type="protein sequence ID" value="EAL72166"/>
    <property type="gene ID" value="DDB_G0269632"/>
</dbReference>
<dbReference type="GeneID" id="8617082"/>
<dbReference type="KEGG" id="ddi:DDB_G0269632"/>
<dbReference type="dictyBase" id="DDB_G0269632">
    <property type="gene designation" value="irlD"/>
</dbReference>
<dbReference type="VEuPathDB" id="AmoebaDB:DDB_G0269632"/>
<dbReference type="eggNOG" id="KOG1027">
    <property type="taxonomic scope" value="Eukaryota"/>
</dbReference>
<dbReference type="HOGENOM" id="CLU_248487_0_0_1"/>
<dbReference type="InParanoid" id="Q55DJ9"/>
<dbReference type="OMA" id="DTHESIY"/>
<dbReference type="PhylomeDB" id="Q55DJ9"/>
<dbReference type="PRO" id="PR:Q55DJ9"/>
<dbReference type="Proteomes" id="UP000002195">
    <property type="component" value="Chromosome 1"/>
</dbReference>
<dbReference type="GO" id="GO:1990604">
    <property type="term" value="C:IRE1-TRAF2-ASK1 complex"/>
    <property type="evidence" value="ECO:0000318"/>
    <property type="project" value="GO_Central"/>
</dbReference>
<dbReference type="GO" id="GO:0005524">
    <property type="term" value="F:ATP binding"/>
    <property type="evidence" value="ECO:0007669"/>
    <property type="project" value="UniProtKB-KW"/>
</dbReference>
<dbReference type="GO" id="GO:0106310">
    <property type="term" value="F:protein serine kinase activity"/>
    <property type="evidence" value="ECO:0007669"/>
    <property type="project" value="RHEA"/>
</dbReference>
<dbReference type="GO" id="GO:0004674">
    <property type="term" value="F:protein serine/threonine kinase activity"/>
    <property type="evidence" value="ECO:0000318"/>
    <property type="project" value="GO_Central"/>
</dbReference>
<dbReference type="GO" id="GO:0004521">
    <property type="term" value="F:RNA endonuclease activity"/>
    <property type="evidence" value="ECO:0000318"/>
    <property type="project" value="GO_Central"/>
</dbReference>
<dbReference type="GO" id="GO:0051082">
    <property type="term" value="F:unfolded protein binding"/>
    <property type="evidence" value="ECO:0000318"/>
    <property type="project" value="GO_Central"/>
</dbReference>
<dbReference type="GO" id="GO:0036498">
    <property type="term" value="P:IRE1-mediated unfolded protein response"/>
    <property type="evidence" value="ECO:0000318"/>
    <property type="project" value="GO_Central"/>
</dbReference>
<dbReference type="GO" id="GO:0006397">
    <property type="term" value="P:mRNA processing"/>
    <property type="evidence" value="ECO:0007669"/>
    <property type="project" value="InterPro"/>
</dbReference>
<dbReference type="CDD" id="cd10321">
    <property type="entry name" value="RNase_Ire1_like"/>
    <property type="match status" value="1"/>
</dbReference>
<dbReference type="FunFam" id="1.20.1440.180:FF:000005">
    <property type="entry name" value="Probable serine/threonine-protein kinase irlD"/>
    <property type="match status" value="1"/>
</dbReference>
<dbReference type="FunFam" id="1.10.510.10:FF:001066">
    <property type="entry name" value="Probable serine/threonine-protein kinase irlE"/>
    <property type="match status" value="1"/>
</dbReference>
<dbReference type="FunFam" id="3.30.200.20:FF:000077">
    <property type="entry name" value="Putative Serine/threonine-protein kinase/endoribonuclease IRE1"/>
    <property type="match status" value="1"/>
</dbReference>
<dbReference type="Gene3D" id="1.20.1440.180">
    <property type="entry name" value="KEN domain"/>
    <property type="match status" value="1"/>
</dbReference>
<dbReference type="Gene3D" id="3.30.200.20">
    <property type="entry name" value="Phosphorylase Kinase, domain 1"/>
    <property type="match status" value="1"/>
</dbReference>
<dbReference type="Gene3D" id="1.10.510.10">
    <property type="entry name" value="Transferase(Phosphotransferase) domain 1"/>
    <property type="match status" value="1"/>
</dbReference>
<dbReference type="InterPro" id="IPR045133">
    <property type="entry name" value="IRE1/2-like"/>
</dbReference>
<dbReference type="InterPro" id="IPR010513">
    <property type="entry name" value="KEN_dom"/>
</dbReference>
<dbReference type="InterPro" id="IPR038357">
    <property type="entry name" value="KEN_sf"/>
</dbReference>
<dbReference type="InterPro" id="IPR011009">
    <property type="entry name" value="Kinase-like_dom_sf"/>
</dbReference>
<dbReference type="InterPro" id="IPR000719">
    <property type="entry name" value="Prot_kinase_dom"/>
</dbReference>
<dbReference type="PANTHER" id="PTHR13954">
    <property type="entry name" value="IRE1-RELATED"/>
    <property type="match status" value="1"/>
</dbReference>
<dbReference type="PANTHER" id="PTHR13954:SF12">
    <property type="entry name" value="SERINE_THREONINE-PROTEIN KINASE IRLA-RELATED"/>
    <property type="match status" value="1"/>
</dbReference>
<dbReference type="Pfam" id="PF00069">
    <property type="entry name" value="Pkinase"/>
    <property type="match status" value="1"/>
</dbReference>
<dbReference type="Pfam" id="PF06479">
    <property type="entry name" value="Ribonuc_2-5A"/>
    <property type="match status" value="1"/>
</dbReference>
<dbReference type="SMART" id="SM00220">
    <property type="entry name" value="S_TKc"/>
    <property type="match status" value="1"/>
</dbReference>
<dbReference type="SUPFAM" id="SSF56112">
    <property type="entry name" value="Protein kinase-like (PK-like)"/>
    <property type="match status" value="1"/>
</dbReference>
<dbReference type="PROSITE" id="PS51392">
    <property type="entry name" value="KEN"/>
    <property type="match status" value="1"/>
</dbReference>
<dbReference type="PROSITE" id="PS50011">
    <property type="entry name" value="PROTEIN_KINASE_DOM"/>
    <property type="match status" value="1"/>
</dbReference>
<feature type="chain" id="PRO_0000362019" description="Probable serine/threonine-protein kinase irlD">
    <location>
        <begin position="1"/>
        <end position="1505"/>
    </location>
</feature>
<feature type="domain" description="Protein kinase" evidence="2">
    <location>
        <begin position="1054"/>
        <end position="1324"/>
    </location>
</feature>
<feature type="domain" description="KEN" evidence="3">
    <location>
        <begin position="1327"/>
        <end position="1505"/>
    </location>
</feature>
<feature type="region of interest" description="Disordered" evidence="4">
    <location>
        <begin position="1"/>
        <end position="30"/>
    </location>
</feature>
<feature type="region of interest" description="Disordered" evidence="4">
    <location>
        <begin position="121"/>
        <end position="211"/>
    </location>
</feature>
<feature type="region of interest" description="Disordered" evidence="4">
    <location>
        <begin position="548"/>
        <end position="571"/>
    </location>
</feature>
<feature type="region of interest" description="Disordered" evidence="4">
    <location>
        <begin position="862"/>
        <end position="1013"/>
    </location>
</feature>
<feature type="coiled-coil region" evidence="1">
    <location>
        <begin position="846"/>
        <end position="892"/>
    </location>
</feature>
<feature type="compositionally biased region" description="Basic residues" evidence="4">
    <location>
        <begin position="1"/>
        <end position="18"/>
    </location>
</feature>
<feature type="compositionally biased region" description="Low complexity" evidence="4">
    <location>
        <begin position="139"/>
        <end position="158"/>
    </location>
</feature>
<feature type="compositionally biased region" description="Polar residues" evidence="4">
    <location>
        <begin position="159"/>
        <end position="172"/>
    </location>
</feature>
<feature type="compositionally biased region" description="Low complexity" evidence="4">
    <location>
        <begin position="173"/>
        <end position="209"/>
    </location>
</feature>
<feature type="compositionally biased region" description="Low complexity" evidence="4">
    <location>
        <begin position="548"/>
        <end position="561"/>
    </location>
</feature>
<feature type="compositionally biased region" description="Basic and acidic residues" evidence="4">
    <location>
        <begin position="562"/>
        <end position="571"/>
    </location>
</feature>
<feature type="compositionally biased region" description="Basic and acidic residues" evidence="4">
    <location>
        <begin position="862"/>
        <end position="882"/>
    </location>
</feature>
<feature type="compositionally biased region" description="Low complexity" evidence="4">
    <location>
        <begin position="896"/>
        <end position="924"/>
    </location>
</feature>
<feature type="compositionally biased region" description="Pro residues" evidence="4">
    <location>
        <begin position="925"/>
        <end position="943"/>
    </location>
</feature>
<feature type="compositionally biased region" description="Low complexity" evidence="4">
    <location>
        <begin position="944"/>
        <end position="954"/>
    </location>
</feature>
<feature type="compositionally biased region" description="Low complexity" evidence="4">
    <location>
        <begin position="960"/>
        <end position="977"/>
    </location>
</feature>
<feature type="compositionally biased region" description="Polar residues" evidence="4">
    <location>
        <begin position="978"/>
        <end position="989"/>
    </location>
</feature>
<feature type="active site" description="Proton acceptor" evidence="2">
    <location>
        <position position="1194"/>
    </location>
</feature>
<feature type="binding site" evidence="2">
    <location>
        <begin position="1060"/>
        <end position="1068"/>
    </location>
    <ligand>
        <name>ATP</name>
        <dbReference type="ChEBI" id="CHEBI:30616"/>
    </ligand>
</feature>
<feature type="binding site" evidence="2">
    <location>
        <position position="1083"/>
    </location>
    <ligand>
        <name>ATP</name>
        <dbReference type="ChEBI" id="CHEBI:30616"/>
    </ligand>
</feature>
<gene>
    <name type="primary">irlD</name>
    <name type="ORF">DDB_G0269632</name>
</gene>
<name>IRLD_DICDI</name>
<organism>
    <name type="scientific">Dictyostelium discoideum</name>
    <name type="common">Social amoeba</name>
    <dbReference type="NCBI Taxonomy" id="44689"/>
    <lineage>
        <taxon>Eukaryota</taxon>
        <taxon>Amoebozoa</taxon>
        <taxon>Evosea</taxon>
        <taxon>Eumycetozoa</taxon>
        <taxon>Dictyostelia</taxon>
        <taxon>Dictyosteliales</taxon>
        <taxon>Dictyosteliaceae</taxon>
        <taxon>Dictyostelium</taxon>
    </lineage>
</organism>